<name>KCY_RICRO</name>
<keyword id="KW-0067">ATP-binding</keyword>
<keyword id="KW-0963">Cytoplasm</keyword>
<keyword id="KW-0418">Kinase</keyword>
<keyword id="KW-0547">Nucleotide-binding</keyword>
<keyword id="KW-0808">Transferase</keyword>
<reference key="1">
    <citation type="journal article" date="2008" name="Infect. Immun.">
        <title>Genomic comparison of virulent Rickettsia rickettsii Sheila Smith and avirulent Rickettsia rickettsii Iowa.</title>
        <authorList>
            <person name="Ellison D.W."/>
            <person name="Clark T.R."/>
            <person name="Sturdevant D.E."/>
            <person name="Virtaneva K."/>
            <person name="Porcella S.F."/>
            <person name="Hackstadt T."/>
        </authorList>
    </citation>
    <scope>NUCLEOTIDE SEQUENCE [LARGE SCALE GENOMIC DNA]</scope>
    <source>
        <strain>Iowa</strain>
    </source>
</reference>
<sequence>MVDLKTKAFDISQNFTIALDGPAASGKGTIGLILAKKFSLKYFQSSIVYRQLAFDCISQKIDVTDIDAVIALSKELKLDNNFDLENENIGNIASQIAVISEIRNNLNKYLINLVKTTPRMIMEGRDIGTVVAPDADLKIFITANPQIRAERRYKQLQAKGKTCILAEILQQIILRDKRDKERKAAPLLPASDALIIDTSKLSAMEVVEEVTNYIKNKIT</sequence>
<accession>B0BXZ0</accession>
<proteinExistence type="inferred from homology"/>
<feature type="chain" id="PRO_1000078345" description="Cytidylate kinase">
    <location>
        <begin position="1"/>
        <end position="219"/>
    </location>
</feature>
<feature type="binding site" evidence="1">
    <location>
        <begin position="21"/>
        <end position="29"/>
    </location>
    <ligand>
        <name>ATP</name>
        <dbReference type="ChEBI" id="CHEBI:30616"/>
    </ligand>
</feature>
<evidence type="ECO:0000255" key="1">
    <source>
        <dbReference type="HAMAP-Rule" id="MF_00238"/>
    </source>
</evidence>
<organism>
    <name type="scientific">Rickettsia rickettsii (strain Iowa)</name>
    <dbReference type="NCBI Taxonomy" id="452659"/>
    <lineage>
        <taxon>Bacteria</taxon>
        <taxon>Pseudomonadati</taxon>
        <taxon>Pseudomonadota</taxon>
        <taxon>Alphaproteobacteria</taxon>
        <taxon>Rickettsiales</taxon>
        <taxon>Rickettsiaceae</taxon>
        <taxon>Rickettsieae</taxon>
        <taxon>Rickettsia</taxon>
        <taxon>spotted fever group</taxon>
    </lineage>
</organism>
<comment type="catalytic activity">
    <reaction evidence="1">
        <text>CMP + ATP = CDP + ADP</text>
        <dbReference type="Rhea" id="RHEA:11600"/>
        <dbReference type="ChEBI" id="CHEBI:30616"/>
        <dbReference type="ChEBI" id="CHEBI:58069"/>
        <dbReference type="ChEBI" id="CHEBI:60377"/>
        <dbReference type="ChEBI" id="CHEBI:456216"/>
        <dbReference type="EC" id="2.7.4.25"/>
    </reaction>
</comment>
<comment type="catalytic activity">
    <reaction evidence="1">
        <text>dCMP + ATP = dCDP + ADP</text>
        <dbReference type="Rhea" id="RHEA:25094"/>
        <dbReference type="ChEBI" id="CHEBI:30616"/>
        <dbReference type="ChEBI" id="CHEBI:57566"/>
        <dbReference type="ChEBI" id="CHEBI:58593"/>
        <dbReference type="ChEBI" id="CHEBI:456216"/>
        <dbReference type="EC" id="2.7.4.25"/>
    </reaction>
</comment>
<comment type="subcellular location">
    <subcellularLocation>
        <location evidence="1">Cytoplasm</location>
    </subcellularLocation>
</comment>
<comment type="similarity">
    <text evidence="1">Belongs to the cytidylate kinase family. Type 1 subfamily.</text>
</comment>
<gene>
    <name evidence="1" type="primary">cmk</name>
    <name type="ordered locus">RrIowa_0887</name>
</gene>
<protein>
    <recommendedName>
        <fullName evidence="1">Cytidylate kinase</fullName>
        <shortName evidence="1">CK</shortName>
        <ecNumber evidence="1">2.7.4.25</ecNumber>
    </recommendedName>
    <alternativeName>
        <fullName evidence="1">Cytidine monophosphate kinase</fullName>
        <shortName evidence="1">CMP kinase</shortName>
    </alternativeName>
</protein>
<dbReference type="EC" id="2.7.4.25" evidence="1"/>
<dbReference type="EMBL" id="CP000766">
    <property type="protein sequence ID" value="ABY72716.1"/>
    <property type="molecule type" value="Genomic_DNA"/>
</dbReference>
<dbReference type="RefSeq" id="WP_012150925.1">
    <property type="nucleotide sequence ID" value="NC_010263.3"/>
</dbReference>
<dbReference type="SMR" id="B0BXZ0"/>
<dbReference type="GeneID" id="79937471"/>
<dbReference type="KEGG" id="rrj:RrIowa_0887"/>
<dbReference type="eggNOG" id="COG0283">
    <property type="taxonomic scope" value="Bacteria"/>
</dbReference>
<dbReference type="HOGENOM" id="CLU_079959_0_2_5"/>
<dbReference type="Proteomes" id="UP000000796">
    <property type="component" value="Chromosome"/>
</dbReference>
<dbReference type="GO" id="GO:0005737">
    <property type="term" value="C:cytoplasm"/>
    <property type="evidence" value="ECO:0007669"/>
    <property type="project" value="UniProtKB-SubCell"/>
</dbReference>
<dbReference type="GO" id="GO:0005524">
    <property type="term" value="F:ATP binding"/>
    <property type="evidence" value="ECO:0007669"/>
    <property type="project" value="UniProtKB-UniRule"/>
</dbReference>
<dbReference type="GO" id="GO:0036430">
    <property type="term" value="F:CMP kinase activity"/>
    <property type="evidence" value="ECO:0007669"/>
    <property type="project" value="RHEA"/>
</dbReference>
<dbReference type="GO" id="GO:0036431">
    <property type="term" value="F:dCMP kinase activity"/>
    <property type="evidence" value="ECO:0007669"/>
    <property type="project" value="RHEA"/>
</dbReference>
<dbReference type="GO" id="GO:0006220">
    <property type="term" value="P:pyrimidine nucleotide metabolic process"/>
    <property type="evidence" value="ECO:0007669"/>
    <property type="project" value="UniProtKB-UniRule"/>
</dbReference>
<dbReference type="CDD" id="cd02020">
    <property type="entry name" value="CMPK"/>
    <property type="match status" value="1"/>
</dbReference>
<dbReference type="Gene3D" id="3.40.50.300">
    <property type="entry name" value="P-loop containing nucleotide triphosphate hydrolases"/>
    <property type="match status" value="1"/>
</dbReference>
<dbReference type="HAMAP" id="MF_00238">
    <property type="entry name" value="Cytidyl_kinase_type1"/>
    <property type="match status" value="1"/>
</dbReference>
<dbReference type="InterPro" id="IPR003136">
    <property type="entry name" value="Cytidylate_kin"/>
</dbReference>
<dbReference type="InterPro" id="IPR011994">
    <property type="entry name" value="Cytidylate_kinase_dom"/>
</dbReference>
<dbReference type="InterPro" id="IPR027417">
    <property type="entry name" value="P-loop_NTPase"/>
</dbReference>
<dbReference type="NCBIfam" id="TIGR00017">
    <property type="entry name" value="cmk"/>
    <property type="match status" value="1"/>
</dbReference>
<dbReference type="Pfam" id="PF02224">
    <property type="entry name" value="Cytidylate_kin"/>
    <property type="match status" value="1"/>
</dbReference>
<dbReference type="SUPFAM" id="SSF52540">
    <property type="entry name" value="P-loop containing nucleoside triphosphate hydrolases"/>
    <property type="match status" value="1"/>
</dbReference>